<organism>
    <name type="scientific">Pseudomonas sp. (strain CBS-3)</name>
    <dbReference type="NCBI Taxonomy" id="72586"/>
    <lineage>
        <taxon>Bacteria</taxon>
        <taxon>Pseudomonadati</taxon>
        <taxon>Pseudomonadota</taxon>
    </lineage>
</organism>
<keyword id="KW-0378">Hydrolase</keyword>
<dbReference type="EC" id="3.8.1.2" evidence="1"/>
<dbReference type="EMBL" id="M62908">
    <property type="protein sequence ID" value="AAA63640.1"/>
    <property type="molecule type" value="Genomic_DNA"/>
</dbReference>
<dbReference type="PIR" id="A38452">
    <property type="entry name" value="A38452"/>
</dbReference>
<dbReference type="SMR" id="P24069"/>
<dbReference type="GO" id="GO:0018784">
    <property type="term" value="F:(S)-2-haloacid dehalogenase activity"/>
    <property type="evidence" value="ECO:0007669"/>
    <property type="project" value="UniProtKB-EC"/>
</dbReference>
<dbReference type="CDD" id="cd02588">
    <property type="entry name" value="HAD_L2-DEX"/>
    <property type="match status" value="1"/>
</dbReference>
<dbReference type="Gene3D" id="3.40.50.1000">
    <property type="entry name" value="HAD superfamily/HAD-like"/>
    <property type="match status" value="1"/>
</dbReference>
<dbReference type="Gene3D" id="1.10.150.240">
    <property type="entry name" value="Putative phosphatase, domain 2"/>
    <property type="match status" value="1"/>
</dbReference>
<dbReference type="InterPro" id="IPR006328">
    <property type="entry name" value="2-HAD"/>
</dbReference>
<dbReference type="InterPro" id="IPR036412">
    <property type="entry name" value="HAD-like_sf"/>
</dbReference>
<dbReference type="InterPro" id="IPR006439">
    <property type="entry name" value="HAD-SF_hydro_IA"/>
</dbReference>
<dbReference type="InterPro" id="IPR023214">
    <property type="entry name" value="HAD_sf"/>
</dbReference>
<dbReference type="InterPro" id="IPR023198">
    <property type="entry name" value="PGP-like_dom2"/>
</dbReference>
<dbReference type="InterPro" id="IPR051540">
    <property type="entry name" value="S-2-haloacid_dehalogenase"/>
</dbReference>
<dbReference type="NCBIfam" id="TIGR01493">
    <property type="entry name" value="HAD-SF-IA-v2"/>
    <property type="match status" value="1"/>
</dbReference>
<dbReference type="NCBIfam" id="TIGR01509">
    <property type="entry name" value="HAD-SF-IA-v3"/>
    <property type="match status" value="1"/>
</dbReference>
<dbReference type="NCBIfam" id="TIGR01428">
    <property type="entry name" value="HAD_type_II"/>
    <property type="match status" value="1"/>
</dbReference>
<dbReference type="PANTHER" id="PTHR43316:SF3">
    <property type="entry name" value="HALOACID DEHALOGENASE, TYPE II (AFU_ORTHOLOGUE AFUA_2G07750)-RELATED"/>
    <property type="match status" value="1"/>
</dbReference>
<dbReference type="PANTHER" id="PTHR43316">
    <property type="entry name" value="HYDROLASE, HALOACID DELAHOGENASE-RELATED"/>
    <property type="match status" value="1"/>
</dbReference>
<dbReference type="Pfam" id="PF00702">
    <property type="entry name" value="Hydrolase"/>
    <property type="match status" value="1"/>
</dbReference>
<dbReference type="PRINTS" id="PR00413">
    <property type="entry name" value="HADHALOGNASE"/>
</dbReference>
<dbReference type="SFLD" id="SFLDF00045">
    <property type="entry name" value="2-haloacid_dehalogenase"/>
    <property type="match status" value="1"/>
</dbReference>
<dbReference type="SFLD" id="SFLDS00003">
    <property type="entry name" value="Haloacid_Dehalogenase"/>
    <property type="match status" value="1"/>
</dbReference>
<dbReference type="SUPFAM" id="SSF56784">
    <property type="entry name" value="HAD-like"/>
    <property type="match status" value="1"/>
</dbReference>
<feature type="chain" id="PRO_0000079160" description="(S)-2-haloacid dehalogenase 1">
    <location>
        <begin position="1"/>
        <end position="227"/>
    </location>
</feature>
<feature type="region of interest" description="Important for catalytic activity" evidence="1">
    <location>
        <begin position="175"/>
        <end position="180"/>
    </location>
</feature>
<feature type="active site" description="Nucleophile" evidence="1">
    <location>
        <position position="10"/>
    </location>
</feature>
<feature type="binding site" evidence="1">
    <location>
        <begin position="11"/>
        <end position="12"/>
    </location>
    <ligand>
        <name>an (S)-2-haloacid</name>
        <dbReference type="ChEBI" id="CHEBI:137405"/>
    </ligand>
</feature>
<feature type="binding site" evidence="1">
    <location>
        <position position="41"/>
    </location>
    <ligand>
        <name>an (S)-2-haloacid</name>
        <dbReference type="ChEBI" id="CHEBI:137405"/>
    </ligand>
</feature>
<feature type="binding site" evidence="1">
    <location>
        <begin position="118"/>
        <end position="119"/>
    </location>
    <ligand>
        <name>an (S)-2-haloacid</name>
        <dbReference type="ChEBI" id="CHEBI:137405"/>
    </ligand>
</feature>
<feature type="site" description="Important for catalytic activity" evidence="1">
    <location>
        <position position="14"/>
    </location>
</feature>
<feature type="site" description="Important for catalytic activity" evidence="1">
    <location>
        <position position="151"/>
    </location>
</feature>
<feature type="site" description="Important for catalytic activity" evidence="1">
    <location>
        <position position="157"/>
    </location>
</feature>
<reference key="1">
    <citation type="journal article" date="1991" name="J. Bacteriol.">
        <title>Complete nucleotide sequences and comparison of the structural genes of two 2-haloalkanoic acid dehalogenases from Pseudomonas sp. strain CBS3.</title>
        <authorList>
            <person name="Schneider B."/>
            <person name="Mueller R."/>
            <person name="Frank R."/>
            <person name="Lingens F."/>
        </authorList>
    </citation>
    <scope>NUCLEOTIDE SEQUENCE [GENOMIC DNA]</scope>
</reference>
<accession>P24069</accession>
<evidence type="ECO:0000250" key="1">
    <source>
        <dbReference type="UniProtKB" id="Q53464"/>
    </source>
</evidence>
<evidence type="ECO:0000303" key="2">
    <source>
    </source>
</evidence>
<evidence type="ECO:0000305" key="3"/>
<sequence>MDPIRACVFDAYGTLLDVNTAVMKHAHDIGGCAEELSSLWRQRQLEYSWTRTLMGRYADFWQLTTEALDFALESFGLLERTDLKNRLLDAYHELSAYPDAVGTLGALKAAGFTTAILSNGNNEMLRGALRAGNLTEALDQCISVDEIKIYKPDPRVYQFACDRLDVRPSEVCFVSSNAWDIGGAGAFGFNTVRINRINKPQEYSFAPQRHQLSSLSELPQLLLRLTQ</sequence>
<proteinExistence type="inferred from homology"/>
<protein>
    <recommendedName>
        <fullName evidence="3">(S)-2-haloacid dehalogenase 1</fullName>
        <ecNumber evidence="1">3.8.1.2</ecNumber>
    </recommendedName>
    <alternativeName>
        <fullName evidence="2">2-haloalkanoic acid dehalogenase I</fullName>
    </alternativeName>
    <alternativeName>
        <fullName evidence="2">DEHCI</fullName>
    </alternativeName>
    <alternativeName>
        <fullName>Halocarboxylic acid halidohydrolase I</fullName>
    </alternativeName>
    <alternativeName>
        <fullName>L-2-haloacid dehalogenase I</fullName>
    </alternativeName>
</protein>
<name>HAD1_PSEUC</name>
<comment type="function">
    <text evidence="1">Catalyzes the hydrolytic dehalogenation of small (S)-2-haloalkanoic acids to yield the corresponding (R)-2-hydroxyalkanoic acids. Acts on acids of short chain lengths, C(2) to C(4), with inversion of configuration at C-2. Active with 2-halogenated carboxylic acids and converts only the S-isomer (or L-isomer) of 2-chloropropionic acid with inversion of configuration to produce R-lactate (or D-isomer).</text>
</comment>
<comment type="catalytic activity">
    <reaction evidence="1">
        <text>an (S)-2-haloacid + H2O = a (2R)-2-hydroxycarboxylate + a halide anion + H(+)</text>
        <dbReference type="Rhea" id="RHEA:11192"/>
        <dbReference type="ChEBI" id="CHEBI:15377"/>
        <dbReference type="ChEBI" id="CHEBI:15378"/>
        <dbReference type="ChEBI" id="CHEBI:16042"/>
        <dbReference type="ChEBI" id="CHEBI:58314"/>
        <dbReference type="ChEBI" id="CHEBI:137405"/>
        <dbReference type="EC" id="3.8.1.2"/>
    </reaction>
</comment>
<comment type="catalytic activity">
    <reaction evidence="1">
        <text>(S)-2-chloropropanoate + H2O = (R)-lactate + chloride + H(+)</text>
        <dbReference type="Rhea" id="RHEA:67956"/>
        <dbReference type="ChEBI" id="CHEBI:15377"/>
        <dbReference type="ChEBI" id="CHEBI:15378"/>
        <dbReference type="ChEBI" id="CHEBI:16004"/>
        <dbReference type="ChEBI" id="CHEBI:17996"/>
        <dbReference type="ChEBI" id="CHEBI:73934"/>
    </reaction>
</comment>
<comment type="biotechnology">
    <text evidence="3">(S)-2-haloacid dehalogenases may be used for the biodegradation of halogenated substances and their derivatives which are widely used as pesticides, herbicides and other industrial products.</text>
</comment>
<comment type="similarity">
    <text evidence="3">Belongs to the HAD-like hydrolase superfamily. S-2-haloalkanoic acid dehalogenase family.</text>
</comment>